<gene>
    <name type="ordered locus">At3g19950</name>
    <name type="ORF">MPN9.19</name>
</gene>
<accession>Q8LPN7</accession>
<accession>Q8GXE4</accession>
<accession>Q9LT14</accession>
<protein>
    <recommendedName>
        <fullName>E3 ubiquitin-protein ligase RING1-like</fullName>
        <ecNumber>2.3.2.27</ecNumber>
    </recommendedName>
    <alternativeName>
        <fullName>RING finger protein 1</fullName>
    </alternativeName>
    <alternativeName>
        <fullName evidence="5">RING-type E3 ubiquitin transferase RING1-like</fullName>
    </alternativeName>
</protein>
<reference key="1">
    <citation type="journal article" date="2000" name="DNA Res.">
        <title>Structural analysis of Arabidopsis thaliana chromosome 3. I. Sequence features of the regions of 4,504,864 bp covered by sixty P1 and TAC clones.</title>
        <authorList>
            <person name="Sato S."/>
            <person name="Nakamura Y."/>
            <person name="Kaneko T."/>
            <person name="Katoh T."/>
            <person name="Asamizu E."/>
            <person name="Tabata S."/>
        </authorList>
    </citation>
    <scope>NUCLEOTIDE SEQUENCE [LARGE SCALE GENOMIC DNA]</scope>
    <source>
        <strain>cv. Columbia</strain>
    </source>
</reference>
<reference key="2">
    <citation type="journal article" date="2017" name="Plant J.">
        <title>Araport11: a complete reannotation of the Arabidopsis thaliana reference genome.</title>
        <authorList>
            <person name="Cheng C.Y."/>
            <person name="Krishnakumar V."/>
            <person name="Chan A.P."/>
            <person name="Thibaud-Nissen F."/>
            <person name="Schobel S."/>
            <person name="Town C.D."/>
        </authorList>
    </citation>
    <scope>GENOME REANNOTATION</scope>
    <source>
        <strain>cv. Columbia</strain>
    </source>
</reference>
<reference key="3">
    <citation type="journal article" date="2003" name="Science">
        <title>Empirical analysis of transcriptional activity in the Arabidopsis genome.</title>
        <authorList>
            <person name="Yamada K."/>
            <person name="Lim J."/>
            <person name="Dale J.M."/>
            <person name="Chen H."/>
            <person name="Shinn P."/>
            <person name="Palm C.J."/>
            <person name="Southwick A.M."/>
            <person name="Wu H.C."/>
            <person name="Kim C.J."/>
            <person name="Nguyen M."/>
            <person name="Pham P.K."/>
            <person name="Cheuk R.F."/>
            <person name="Karlin-Newmann G."/>
            <person name="Liu S.X."/>
            <person name="Lam B."/>
            <person name="Sakano H."/>
            <person name="Wu T."/>
            <person name="Yu G."/>
            <person name="Miranda M."/>
            <person name="Quach H.L."/>
            <person name="Tripp M."/>
            <person name="Chang C.H."/>
            <person name="Lee J.M."/>
            <person name="Toriumi M.J."/>
            <person name="Chan M.M."/>
            <person name="Tang C.C."/>
            <person name="Onodera C.S."/>
            <person name="Deng J.M."/>
            <person name="Akiyama K."/>
            <person name="Ansari Y."/>
            <person name="Arakawa T."/>
            <person name="Banh J."/>
            <person name="Banno F."/>
            <person name="Bowser L."/>
            <person name="Brooks S.Y."/>
            <person name="Carninci P."/>
            <person name="Chao Q."/>
            <person name="Choy N."/>
            <person name="Enju A."/>
            <person name="Goldsmith A.D."/>
            <person name="Gurjal M."/>
            <person name="Hansen N.F."/>
            <person name="Hayashizaki Y."/>
            <person name="Johnson-Hopson C."/>
            <person name="Hsuan V.W."/>
            <person name="Iida K."/>
            <person name="Karnes M."/>
            <person name="Khan S."/>
            <person name="Koesema E."/>
            <person name="Ishida J."/>
            <person name="Jiang P.X."/>
            <person name="Jones T."/>
            <person name="Kawai J."/>
            <person name="Kamiya A."/>
            <person name="Meyers C."/>
            <person name="Nakajima M."/>
            <person name="Narusaka M."/>
            <person name="Seki M."/>
            <person name="Sakurai T."/>
            <person name="Satou M."/>
            <person name="Tamse R."/>
            <person name="Vaysberg M."/>
            <person name="Wallender E.K."/>
            <person name="Wong C."/>
            <person name="Yamamura Y."/>
            <person name="Yuan S."/>
            <person name="Shinozaki K."/>
            <person name="Davis R.W."/>
            <person name="Theologis A."/>
            <person name="Ecker J.R."/>
        </authorList>
    </citation>
    <scope>NUCLEOTIDE SEQUENCE [LARGE SCALE MRNA]</scope>
    <source>
        <strain>cv. Columbia</strain>
    </source>
</reference>
<reference key="4">
    <citation type="journal article" date="2002" name="Science">
        <title>Functional annotation of a full-length Arabidopsis cDNA collection.</title>
        <authorList>
            <person name="Seki M."/>
            <person name="Narusaka M."/>
            <person name="Kamiya A."/>
            <person name="Ishida J."/>
            <person name="Satou M."/>
            <person name="Sakurai T."/>
            <person name="Nakajima M."/>
            <person name="Enju A."/>
            <person name="Akiyama K."/>
            <person name="Oono Y."/>
            <person name="Muramatsu M."/>
            <person name="Hayashizaki Y."/>
            <person name="Kawai J."/>
            <person name="Carninci P."/>
            <person name="Itoh M."/>
            <person name="Ishii Y."/>
            <person name="Arakawa T."/>
            <person name="Shibata K."/>
            <person name="Shinagawa A."/>
            <person name="Shinozaki K."/>
        </authorList>
    </citation>
    <scope>NUCLEOTIDE SEQUENCE [LARGE SCALE MRNA] OF 160-328</scope>
    <source>
        <strain>cv. Columbia</strain>
    </source>
</reference>
<reference key="5">
    <citation type="journal article" date="2010" name="Mol. Biotechnol.">
        <title>Characterization and promoter analysis of a cotton RING-type ubiquitin ligase (E3) gene.</title>
        <authorList>
            <person name="Ho M.-H."/>
            <person name="Saha S."/>
            <person name="Jenkins J.N."/>
            <person name="Ma D.-P."/>
        </authorList>
    </citation>
    <scope>TISSUE SPECIFICITY</scope>
</reference>
<reference key="6">
    <citation type="journal article" date="2012" name="Mol. Cell. Proteomics">
        <title>Comparative large-scale characterisation of plant vs. mammal proteins reveals similar and idiosyncratic N-alpha acetylation features.</title>
        <authorList>
            <person name="Bienvenut W.V."/>
            <person name="Sumpton D."/>
            <person name="Martinez A."/>
            <person name="Lilla S."/>
            <person name="Espagne C."/>
            <person name="Meinnel T."/>
            <person name="Giglione C."/>
        </authorList>
    </citation>
    <scope>ACETYLATION [LARGE SCALE ANALYSIS] AT SER-2</scope>
    <scope>CLEAVAGE OF INITIATOR METHIONINE [LARGE SCALE ANALYSIS]</scope>
    <scope>IDENTIFICATION BY MASS SPECTROMETRY [LARGE SCALE ANALYSIS]</scope>
</reference>
<organism>
    <name type="scientific">Arabidopsis thaliana</name>
    <name type="common">Mouse-ear cress</name>
    <dbReference type="NCBI Taxonomy" id="3702"/>
    <lineage>
        <taxon>Eukaryota</taxon>
        <taxon>Viridiplantae</taxon>
        <taxon>Streptophyta</taxon>
        <taxon>Embryophyta</taxon>
        <taxon>Tracheophyta</taxon>
        <taxon>Spermatophyta</taxon>
        <taxon>Magnoliopsida</taxon>
        <taxon>eudicotyledons</taxon>
        <taxon>Gunneridae</taxon>
        <taxon>Pentapetalae</taxon>
        <taxon>rosids</taxon>
        <taxon>malvids</taxon>
        <taxon>Brassicales</taxon>
        <taxon>Brassicaceae</taxon>
        <taxon>Camelineae</taxon>
        <taxon>Arabidopsis</taxon>
    </lineage>
</organism>
<keyword id="KW-0007">Acetylation</keyword>
<keyword id="KW-0479">Metal-binding</keyword>
<keyword id="KW-1185">Reference proteome</keyword>
<keyword id="KW-0808">Transferase</keyword>
<keyword id="KW-0832">Ubl conjugation</keyword>
<keyword id="KW-0833">Ubl conjugation pathway</keyword>
<keyword id="KW-0862">Zinc</keyword>
<keyword id="KW-0863">Zinc-finger</keyword>
<dbReference type="EC" id="2.3.2.27"/>
<dbReference type="EMBL" id="AB025631">
    <property type="protein sequence ID" value="BAB01310.1"/>
    <property type="status" value="ALT_SEQ"/>
    <property type="molecule type" value="Genomic_DNA"/>
</dbReference>
<dbReference type="EMBL" id="CP002686">
    <property type="protein sequence ID" value="AEE76311.1"/>
    <property type="molecule type" value="Genomic_DNA"/>
</dbReference>
<dbReference type="EMBL" id="AY095995">
    <property type="protein sequence ID" value="AAM19951.1"/>
    <property type="molecule type" value="mRNA"/>
</dbReference>
<dbReference type="EMBL" id="BT000583">
    <property type="protein sequence ID" value="AAN18152.1"/>
    <property type="molecule type" value="mRNA"/>
</dbReference>
<dbReference type="EMBL" id="AK118283">
    <property type="protein sequence ID" value="BAC42901.1"/>
    <property type="status" value="ALT_INIT"/>
    <property type="molecule type" value="mRNA"/>
</dbReference>
<dbReference type="RefSeq" id="NP_001326918.1">
    <property type="nucleotide sequence ID" value="NM_001338429.1"/>
</dbReference>
<dbReference type="RefSeq" id="NP_001326919.1">
    <property type="nucleotide sequence ID" value="NM_001338430.1"/>
</dbReference>
<dbReference type="RefSeq" id="NP_188629.1">
    <property type="nucleotide sequence ID" value="NM_112885.5"/>
</dbReference>
<dbReference type="SMR" id="Q8LPN7"/>
<dbReference type="BioGRID" id="6865">
    <property type="interactions" value="3"/>
</dbReference>
<dbReference type="FunCoup" id="Q8LPN7">
    <property type="interactions" value="1750"/>
</dbReference>
<dbReference type="IntAct" id="Q8LPN7">
    <property type="interactions" value="2"/>
</dbReference>
<dbReference type="STRING" id="3702.Q8LPN7"/>
<dbReference type="iPTMnet" id="Q8LPN7"/>
<dbReference type="PaxDb" id="3702-AT3G19950.1"/>
<dbReference type="ProteomicsDB" id="227999"/>
<dbReference type="EnsemblPlants" id="AT3G19950.1">
    <property type="protein sequence ID" value="AT3G19950.1"/>
    <property type="gene ID" value="AT3G19950"/>
</dbReference>
<dbReference type="GeneID" id="821533"/>
<dbReference type="Gramene" id="AT3G19950.1">
    <property type="protein sequence ID" value="AT3G19950.1"/>
    <property type="gene ID" value="AT3G19950"/>
</dbReference>
<dbReference type="KEGG" id="ath:AT3G19950"/>
<dbReference type="Araport" id="AT3G19950"/>
<dbReference type="TAIR" id="AT3G19950">
    <property type="gene designation" value="BTL08"/>
</dbReference>
<dbReference type="eggNOG" id="KOG0800">
    <property type="taxonomic scope" value="Eukaryota"/>
</dbReference>
<dbReference type="HOGENOM" id="CLU_034892_3_2_1"/>
<dbReference type="InParanoid" id="Q8LPN7"/>
<dbReference type="OMA" id="ERGWESW"/>
<dbReference type="PhylomeDB" id="Q8LPN7"/>
<dbReference type="UniPathway" id="UPA00143"/>
<dbReference type="PRO" id="PR:Q8LPN7"/>
<dbReference type="Proteomes" id="UP000006548">
    <property type="component" value="Chromosome 3"/>
</dbReference>
<dbReference type="ExpressionAtlas" id="Q8LPN7">
    <property type="expression patterns" value="baseline and differential"/>
</dbReference>
<dbReference type="GO" id="GO:0061630">
    <property type="term" value="F:ubiquitin protein ligase activity"/>
    <property type="evidence" value="ECO:0007669"/>
    <property type="project" value="InterPro"/>
</dbReference>
<dbReference type="GO" id="GO:0008270">
    <property type="term" value="F:zinc ion binding"/>
    <property type="evidence" value="ECO:0007669"/>
    <property type="project" value="UniProtKB-KW"/>
</dbReference>
<dbReference type="GO" id="GO:0016567">
    <property type="term" value="P:protein ubiquitination"/>
    <property type="evidence" value="ECO:0007669"/>
    <property type="project" value="UniProtKB-UniPathway"/>
</dbReference>
<dbReference type="CDD" id="cd16667">
    <property type="entry name" value="RING-H2_RNF126-like"/>
    <property type="match status" value="1"/>
</dbReference>
<dbReference type="FunFam" id="3.30.40.10:FF:000022">
    <property type="entry name" value="E3 ubiquitin-protein ligase RING1-like"/>
    <property type="match status" value="1"/>
</dbReference>
<dbReference type="Gene3D" id="3.30.40.10">
    <property type="entry name" value="Zinc/RING finger domain, C3HC4 (zinc finger)"/>
    <property type="match status" value="1"/>
</dbReference>
<dbReference type="InterPro" id="IPR039525">
    <property type="entry name" value="RNF126-like_zinc-ribbon"/>
</dbReference>
<dbReference type="InterPro" id="IPR001841">
    <property type="entry name" value="Znf_RING"/>
</dbReference>
<dbReference type="InterPro" id="IPR013083">
    <property type="entry name" value="Znf_RING/FYVE/PHD"/>
</dbReference>
<dbReference type="PANTHER" id="PTHR15710">
    <property type="entry name" value="E3 UBIQUITIN-PROTEIN LIGASE PRAJA"/>
    <property type="match status" value="1"/>
</dbReference>
<dbReference type="PANTHER" id="PTHR15710:SF208">
    <property type="entry name" value="E3 UBIQUITIN-PROTEIN LIGASE RING1-LIKE"/>
    <property type="match status" value="1"/>
</dbReference>
<dbReference type="Pfam" id="PF13639">
    <property type="entry name" value="zf-RING_2"/>
    <property type="match status" value="1"/>
</dbReference>
<dbReference type="Pfam" id="PF14369">
    <property type="entry name" value="Zn_ribbon_19"/>
    <property type="match status" value="1"/>
</dbReference>
<dbReference type="SMART" id="SM00184">
    <property type="entry name" value="RING"/>
    <property type="match status" value="1"/>
</dbReference>
<dbReference type="SUPFAM" id="SSF57850">
    <property type="entry name" value="RING/U-box"/>
    <property type="match status" value="1"/>
</dbReference>
<dbReference type="PROSITE" id="PS50089">
    <property type="entry name" value="ZF_RING_2"/>
    <property type="match status" value="1"/>
</dbReference>
<sequence>MSSGVNSTGSAAAAPEVDKMFFCYQCNQTVTISISSSADPFCPICNQGFLEEYEDPNPNQSLNFNPNSSDSFFPMADPFSTLLPLIFGSSAAAPSGMDFMSLFGPSMQPQARSTQQNPQSDAFDPFTFLQNHLQTLRSSGTHFEFVIENHPSDPGNRMPGNFGDYFFGPGLEQLIQQLAENDPNRYGTPPASKSAIDALPTVKVTKDMLKSEMNQCAVCMDEFEDGSDVKQMPCKHVFHQDCLLPWLELHNSCPVCRFELPTDDPDYENRSQGSQGSGDGQGSVEGQQTPRFSIQLPWPFRRQDGSGSGSGAPGTGGGNLETRGEDLD</sequence>
<name>RNG1L_ARATH</name>
<feature type="initiator methionine" description="Removed" evidence="6">
    <location>
        <position position="1"/>
    </location>
</feature>
<feature type="chain" id="PRO_0000396833" description="E3 ubiquitin-protein ligase RING1-like">
    <location>
        <begin position="2"/>
        <end position="328"/>
    </location>
</feature>
<feature type="zinc finger region" description="RING-type; atypical" evidence="2">
    <location>
        <begin position="216"/>
        <end position="257"/>
    </location>
</feature>
<feature type="region of interest" description="Disordered" evidence="3">
    <location>
        <begin position="264"/>
        <end position="328"/>
    </location>
</feature>
<feature type="compositionally biased region" description="Gly residues" evidence="3">
    <location>
        <begin position="306"/>
        <end position="319"/>
    </location>
</feature>
<feature type="modified residue" description="N-acetylserine" evidence="6">
    <location>
        <position position="2"/>
    </location>
</feature>
<comment type="function">
    <text evidence="1">E3 ubiquitin-protein ligase which accepts ubiquitin from an E2 ubiquitin-conjugating enzyme in the form of a thioester and then directly transfers the ubiquitin to targeted substrates. Promotes polyubiquitination of target proteins.</text>
</comment>
<comment type="catalytic activity">
    <reaction>
        <text>S-ubiquitinyl-[E2 ubiquitin-conjugating enzyme]-L-cysteine + [acceptor protein]-L-lysine = [E2 ubiquitin-conjugating enzyme]-L-cysteine + N(6)-ubiquitinyl-[acceptor protein]-L-lysine.</text>
        <dbReference type="EC" id="2.3.2.27"/>
    </reaction>
</comment>
<comment type="pathway">
    <text>Protein modification; protein ubiquitination.</text>
</comment>
<comment type="tissue specificity">
    <text evidence="4">Expressed in leaves, roots, trichomes, stipules, and also in anthers and stigma of flowers.</text>
</comment>
<comment type="PTM">
    <text evidence="1">Auto-ubiquitinated as part of the enzymatic reaction.</text>
</comment>
<comment type="sequence caution" evidence="5">
    <conflict type="erroneous gene model prediction">
        <sequence resource="EMBL-CDS" id="BAB01310"/>
    </conflict>
</comment>
<comment type="sequence caution" evidence="5">
    <conflict type="erroneous initiation">
        <sequence resource="EMBL-CDS" id="BAC42901"/>
    </conflict>
    <text>Truncated N-terminus.</text>
</comment>
<proteinExistence type="evidence at protein level"/>
<evidence type="ECO:0000250" key="1"/>
<evidence type="ECO:0000255" key="2">
    <source>
        <dbReference type="PROSITE-ProRule" id="PRU00175"/>
    </source>
</evidence>
<evidence type="ECO:0000256" key="3">
    <source>
        <dbReference type="SAM" id="MobiDB-lite"/>
    </source>
</evidence>
<evidence type="ECO:0000269" key="4">
    <source>
    </source>
</evidence>
<evidence type="ECO:0000305" key="5"/>
<evidence type="ECO:0007744" key="6">
    <source>
    </source>
</evidence>